<feature type="chain" id="PRO_0000103205" description="Uncharacterized DapA-like lyase PH0847">
    <location>
        <begin position="1"/>
        <end position="287"/>
    </location>
</feature>
<feature type="active site" description="Charge relay system" evidence="1">
    <location>
        <position position="43"/>
    </location>
</feature>
<feature type="active site" description="Charge relay system" evidence="1">
    <location>
        <position position="104"/>
    </location>
</feature>
<feature type="active site" description="Proton donor" evidence="1">
    <location>
        <position position="130"/>
    </location>
</feature>
<feature type="active site" description="Schiff-base intermediate with substrate" evidence="1">
    <location>
        <position position="158"/>
    </location>
</feature>
<sequence length="287" mass="31960">MEGVIVPLITPFKEDHSIDFEALEWLIKFLEEKGVHGIFINSTTGEFTSLSLEERKILAEKGREVTSRTYLVGTGSTSTFEVIELTKHAKEIGADGVVIVSPYYCRLKEDAIFKHFSMVAEKVDIPIILYAIPSCANPISLEVVRKLALEYSNVIGVKASVDSLTYLSGLIEIKEERKDFKVFTGLDQYFLPNLILGGDGGIMACANFVPEIHLEVWNAFKKGNLEKAMNSARKLVKITKIYSIASSFASAVKLAMVARGFPIKPILRPPYMMDGEEVFKKIKEIVS</sequence>
<organism>
    <name type="scientific">Pyrococcus horikoshii (strain ATCC 700860 / DSM 12428 / JCM 9974 / NBRC 100139 / OT-3)</name>
    <dbReference type="NCBI Taxonomy" id="70601"/>
    <lineage>
        <taxon>Archaea</taxon>
        <taxon>Methanobacteriati</taxon>
        <taxon>Methanobacteriota</taxon>
        <taxon>Thermococci</taxon>
        <taxon>Thermococcales</taxon>
        <taxon>Thermococcaceae</taxon>
        <taxon>Pyrococcus</taxon>
    </lineage>
</organism>
<name>DAPAL_PYRHO</name>
<evidence type="ECO:0000250" key="1"/>
<evidence type="ECO:0000305" key="2"/>
<keyword id="KW-0963">Cytoplasm</keyword>
<keyword id="KW-0456">Lyase</keyword>
<keyword id="KW-0704">Schiff base</keyword>
<dbReference type="EC" id="4.-.-.-"/>
<dbReference type="EMBL" id="BA000001">
    <property type="protein sequence ID" value="BAA29941.1"/>
    <property type="molecule type" value="Genomic_DNA"/>
</dbReference>
<dbReference type="PIR" id="C71135">
    <property type="entry name" value="C71135"/>
</dbReference>
<dbReference type="RefSeq" id="WP_010884940.1">
    <property type="nucleotide sequence ID" value="NC_000961.1"/>
</dbReference>
<dbReference type="SMR" id="O58577"/>
<dbReference type="STRING" id="70601.gene:9377798"/>
<dbReference type="EnsemblBacteria" id="BAA29941">
    <property type="protein sequence ID" value="BAA29941"/>
    <property type="gene ID" value="BAA29941"/>
</dbReference>
<dbReference type="GeneID" id="1443175"/>
<dbReference type="KEGG" id="pho:PH0847"/>
<dbReference type="eggNOG" id="arCOG04172">
    <property type="taxonomic scope" value="Archaea"/>
</dbReference>
<dbReference type="OrthoDB" id="33636at2157"/>
<dbReference type="Proteomes" id="UP000000752">
    <property type="component" value="Chromosome"/>
</dbReference>
<dbReference type="GO" id="GO:0005737">
    <property type="term" value="C:cytoplasm"/>
    <property type="evidence" value="ECO:0007669"/>
    <property type="project" value="UniProtKB-SubCell"/>
</dbReference>
<dbReference type="GO" id="GO:0008675">
    <property type="term" value="F:2-dehydro-3-deoxy-phosphogluconate aldolase activity"/>
    <property type="evidence" value="ECO:0007669"/>
    <property type="project" value="UniProtKB-ARBA"/>
</dbReference>
<dbReference type="GO" id="GO:0008840">
    <property type="term" value="F:4-hydroxy-tetrahydrodipicolinate synthase activity"/>
    <property type="evidence" value="ECO:0007669"/>
    <property type="project" value="TreeGrafter"/>
</dbReference>
<dbReference type="GO" id="GO:0044281">
    <property type="term" value="P:small molecule metabolic process"/>
    <property type="evidence" value="ECO:0007669"/>
    <property type="project" value="UniProtKB-ARBA"/>
</dbReference>
<dbReference type="CDD" id="cd00408">
    <property type="entry name" value="DHDPS-like"/>
    <property type="match status" value="1"/>
</dbReference>
<dbReference type="Gene3D" id="3.20.20.70">
    <property type="entry name" value="Aldolase class I"/>
    <property type="match status" value="1"/>
</dbReference>
<dbReference type="InterPro" id="IPR013785">
    <property type="entry name" value="Aldolase_TIM"/>
</dbReference>
<dbReference type="InterPro" id="IPR002220">
    <property type="entry name" value="DapA-like"/>
</dbReference>
<dbReference type="InterPro" id="IPR020625">
    <property type="entry name" value="Schiff_base-form_aldolases_AS"/>
</dbReference>
<dbReference type="PANTHER" id="PTHR12128:SF66">
    <property type="entry name" value="4-HYDROXY-2-OXOGLUTARATE ALDOLASE, MITOCHONDRIAL"/>
    <property type="match status" value="1"/>
</dbReference>
<dbReference type="PANTHER" id="PTHR12128">
    <property type="entry name" value="DIHYDRODIPICOLINATE SYNTHASE"/>
    <property type="match status" value="1"/>
</dbReference>
<dbReference type="Pfam" id="PF00701">
    <property type="entry name" value="DHDPS"/>
    <property type="match status" value="1"/>
</dbReference>
<dbReference type="PIRSF" id="PIRSF001365">
    <property type="entry name" value="DHDPS"/>
    <property type="match status" value="1"/>
</dbReference>
<dbReference type="PRINTS" id="PR00146">
    <property type="entry name" value="DHPICSNTHASE"/>
</dbReference>
<dbReference type="SMART" id="SM01130">
    <property type="entry name" value="DHDPS"/>
    <property type="match status" value="1"/>
</dbReference>
<dbReference type="SUPFAM" id="SSF51569">
    <property type="entry name" value="Aldolase"/>
    <property type="match status" value="1"/>
</dbReference>
<dbReference type="PROSITE" id="PS00666">
    <property type="entry name" value="DHDPS_2"/>
    <property type="match status" value="1"/>
</dbReference>
<protein>
    <recommendedName>
        <fullName>Uncharacterized DapA-like lyase PH0847</fullName>
        <ecNumber>4.-.-.-</ecNumber>
    </recommendedName>
</protein>
<proteinExistence type="inferred from homology"/>
<gene>
    <name type="primary">dapAL</name>
    <name type="ordered locus">PH0847</name>
</gene>
<comment type="subunit">
    <text evidence="1">Homotetramer.</text>
</comment>
<comment type="subcellular location">
    <subcellularLocation>
        <location evidence="2">Cytoplasm</location>
    </subcellularLocation>
</comment>
<comment type="similarity">
    <text evidence="2">Belongs to the DapA family.</text>
</comment>
<accession>O58577</accession>
<reference key="1">
    <citation type="journal article" date="1998" name="DNA Res.">
        <title>Complete sequence and gene organization of the genome of a hyper-thermophilic archaebacterium, Pyrococcus horikoshii OT3.</title>
        <authorList>
            <person name="Kawarabayasi Y."/>
            <person name="Sawada M."/>
            <person name="Horikawa H."/>
            <person name="Haikawa Y."/>
            <person name="Hino Y."/>
            <person name="Yamamoto S."/>
            <person name="Sekine M."/>
            <person name="Baba S."/>
            <person name="Kosugi H."/>
            <person name="Hosoyama A."/>
            <person name="Nagai Y."/>
            <person name="Sakai M."/>
            <person name="Ogura K."/>
            <person name="Otsuka R."/>
            <person name="Nakazawa H."/>
            <person name="Takamiya M."/>
            <person name="Ohfuku Y."/>
            <person name="Funahashi T."/>
            <person name="Tanaka T."/>
            <person name="Kudoh Y."/>
            <person name="Yamazaki J."/>
            <person name="Kushida N."/>
            <person name="Oguchi A."/>
            <person name="Aoki K."/>
            <person name="Yoshizawa T."/>
            <person name="Nakamura Y."/>
            <person name="Robb F.T."/>
            <person name="Horikoshi K."/>
            <person name="Masuchi Y."/>
            <person name="Shizuya H."/>
            <person name="Kikuchi H."/>
        </authorList>
    </citation>
    <scope>NUCLEOTIDE SEQUENCE [LARGE SCALE GENOMIC DNA]</scope>
    <source>
        <strain>ATCC 700860 / DSM 12428 / JCM 9974 / NBRC 100139 / OT-3</strain>
    </source>
</reference>